<dbReference type="EMBL" id="CR855579">
    <property type="protein sequence ID" value="CAJ83694.1"/>
    <property type="molecule type" value="mRNA"/>
</dbReference>
<dbReference type="EMBL" id="BC067929">
    <property type="protein sequence ID" value="AAH67929.1"/>
    <property type="molecule type" value="mRNA"/>
</dbReference>
<dbReference type="RefSeq" id="NP_998858.1">
    <property type="nucleotide sequence ID" value="NM_213693.1"/>
</dbReference>
<dbReference type="SMR" id="Q6NVS5"/>
<dbReference type="FunCoup" id="Q6NVS5">
    <property type="interactions" value="3180"/>
</dbReference>
<dbReference type="STRING" id="8364.ENSXETP00000018218"/>
<dbReference type="PaxDb" id="8364-ENSXETP00000008850"/>
<dbReference type="GeneID" id="407967"/>
<dbReference type="KEGG" id="xtr:407967"/>
<dbReference type="AGR" id="Xenbase:XB-GENE-5791289"/>
<dbReference type="CTD" id="25879"/>
<dbReference type="Xenbase" id="XB-GENE-5791289">
    <property type="gene designation" value="dcaf13"/>
</dbReference>
<dbReference type="eggNOG" id="KOG0268">
    <property type="taxonomic scope" value="Eukaryota"/>
</dbReference>
<dbReference type="InParanoid" id="Q6NVS5"/>
<dbReference type="OMA" id="EDHNAYI"/>
<dbReference type="OrthoDB" id="10249065at2759"/>
<dbReference type="Reactome" id="R-XTR-8951664">
    <property type="pathway name" value="Neddylation"/>
</dbReference>
<dbReference type="UniPathway" id="UPA00143"/>
<dbReference type="Proteomes" id="UP000008143">
    <property type="component" value="Chromosome 6"/>
</dbReference>
<dbReference type="Bgee" id="ENSXETG00000004092">
    <property type="expression patterns" value="Expressed in blastula and 13 other cell types or tissues"/>
</dbReference>
<dbReference type="GO" id="GO:0080008">
    <property type="term" value="C:Cul4-RING E3 ubiquitin ligase complex"/>
    <property type="evidence" value="ECO:0000250"/>
    <property type="project" value="UniProtKB"/>
</dbReference>
<dbReference type="GO" id="GO:0005730">
    <property type="term" value="C:nucleolus"/>
    <property type="evidence" value="ECO:0000250"/>
    <property type="project" value="UniProtKB"/>
</dbReference>
<dbReference type="GO" id="GO:1990904">
    <property type="term" value="C:ribonucleoprotein complex"/>
    <property type="evidence" value="ECO:0007669"/>
    <property type="project" value="UniProtKB-KW"/>
</dbReference>
<dbReference type="GO" id="GO:1990756">
    <property type="term" value="F:ubiquitin-like ligase-substrate adaptor activity"/>
    <property type="evidence" value="ECO:0000250"/>
    <property type="project" value="UniProtKB"/>
</dbReference>
<dbReference type="GO" id="GO:0001555">
    <property type="term" value="P:oocyte growth"/>
    <property type="evidence" value="ECO:0000250"/>
    <property type="project" value="UniProtKB"/>
</dbReference>
<dbReference type="GO" id="GO:0016567">
    <property type="term" value="P:protein ubiquitination"/>
    <property type="evidence" value="ECO:0007669"/>
    <property type="project" value="UniProtKB-UniPathway"/>
</dbReference>
<dbReference type="GO" id="GO:0006364">
    <property type="term" value="P:rRNA processing"/>
    <property type="evidence" value="ECO:0000250"/>
    <property type="project" value="UniProtKB"/>
</dbReference>
<dbReference type="CDD" id="cd00200">
    <property type="entry name" value="WD40"/>
    <property type="match status" value="1"/>
</dbReference>
<dbReference type="FunFam" id="2.130.10.10:FF:000132">
    <property type="entry name" value="DDB1- and CUL4-associated factor 13"/>
    <property type="match status" value="1"/>
</dbReference>
<dbReference type="FunFam" id="2.130.10.10:FF:000269">
    <property type="entry name" value="DDB1- and CUL4-associated factor 13"/>
    <property type="match status" value="1"/>
</dbReference>
<dbReference type="Gene3D" id="2.130.10.10">
    <property type="entry name" value="YVTN repeat-like/Quinoprotein amine dehydrogenase"/>
    <property type="match status" value="2"/>
</dbReference>
<dbReference type="InterPro" id="IPR007287">
    <property type="entry name" value="Sof1"/>
</dbReference>
<dbReference type="InterPro" id="IPR015943">
    <property type="entry name" value="WD40/YVTN_repeat-like_dom_sf"/>
</dbReference>
<dbReference type="InterPro" id="IPR019775">
    <property type="entry name" value="WD40_repeat_CS"/>
</dbReference>
<dbReference type="InterPro" id="IPR036322">
    <property type="entry name" value="WD40_repeat_dom_sf"/>
</dbReference>
<dbReference type="InterPro" id="IPR001680">
    <property type="entry name" value="WD40_rpt"/>
</dbReference>
<dbReference type="InterPro" id="IPR051733">
    <property type="entry name" value="WD_repeat_DCAF13/WDSOF1"/>
</dbReference>
<dbReference type="PANTHER" id="PTHR22851:SF0">
    <property type="entry name" value="DDB1- AND CUL4-ASSOCIATED FACTOR 13"/>
    <property type="match status" value="1"/>
</dbReference>
<dbReference type="PANTHER" id="PTHR22851">
    <property type="entry name" value="U3 SMALL NUCLEOLAR RNA U3 SNORNA ASSOCIATED PROTEIN"/>
    <property type="match status" value="1"/>
</dbReference>
<dbReference type="Pfam" id="PF04158">
    <property type="entry name" value="Sof1"/>
    <property type="match status" value="1"/>
</dbReference>
<dbReference type="Pfam" id="PF00400">
    <property type="entry name" value="WD40"/>
    <property type="match status" value="5"/>
</dbReference>
<dbReference type="SMART" id="SM00320">
    <property type="entry name" value="WD40"/>
    <property type="match status" value="6"/>
</dbReference>
<dbReference type="SUPFAM" id="SSF50978">
    <property type="entry name" value="WD40 repeat-like"/>
    <property type="match status" value="1"/>
</dbReference>
<dbReference type="PROSITE" id="PS00678">
    <property type="entry name" value="WD_REPEATS_1"/>
    <property type="match status" value="1"/>
</dbReference>
<dbReference type="PROSITE" id="PS50082">
    <property type="entry name" value="WD_REPEATS_2"/>
    <property type="match status" value="3"/>
</dbReference>
<dbReference type="PROSITE" id="PS50294">
    <property type="entry name" value="WD_REPEATS_REGION"/>
    <property type="match status" value="1"/>
</dbReference>
<keyword id="KW-0539">Nucleus</keyword>
<keyword id="KW-1185">Reference proteome</keyword>
<keyword id="KW-0677">Repeat</keyword>
<keyword id="KW-0687">Ribonucleoprotein</keyword>
<keyword id="KW-0690">Ribosome biogenesis</keyword>
<keyword id="KW-0698">rRNA processing</keyword>
<keyword id="KW-0833">Ubl conjugation pathway</keyword>
<keyword id="KW-0853">WD repeat</keyword>
<proteinExistence type="evidence at transcript level"/>
<feature type="chain" id="PRO_0000310434" description="DDB1- and CUL4-associated factor 13">
    <location>
        <begin position="1"/>
        <end position="445"/>
    </location>
</feature>
<feature type="repeat" description="WD 1">
    <location>
        <begin position="64"/>
        <end position="104"/>
    </location>
</feature>
<feature type="repeat" description="WD 2">
    <location>
        <begin position="107"/>
        <end position="146"/>
    </location>
</feature>
<feature type="repeat" description="WD 3">
    <location>
        <begin position="154"/>
        <end position="191"/>
    </location>
</feature>
<feature type="repeat" description="WD 4">
    <location>
        <begin position="194"/>
        <end position="234"/>
    </location>
</feature>
<feature type="repeat" description="WD 5">
    <location>
        <begin position="236"/>
        <end position="276"/>
    </location>
</feature>
<feature type="repeat" description="WD 6">
    <location>
        <begin position="280"/>
        <end position="319"/>
    </location>
</feature>
<feature type="repeat" description="WD 7">
    <location>
        <begin position="323"/>
        <end position="362"/>
    </location>
</feature>
<feature type="region of interest" description="Required for nucleolar location" evidence="1">
    <location>
        <begin position="353"/>
        <end position="441"/>
    </location>
</feature>
<feature type="region of interest" description="Disordered" evidence="3">
    <location>
        <begin position="413"/>
        <end position="445"/>
    </location>
</feature>
<feature type="compositionally biased region" description="Basic residues" evidence="3">
    <location>
        <begin position="413"/>
        <end position="426"/>
    </location>
</feature>
<feature type="compositionally biased region" description="Basic residues" evidence="3">
    <location>
        <begin position="436"/>
        <end position="445"/>
    </location>
</feature>
<organism>
    <name type="scientific">Xenopus tropicalis</name>
    <name type="common">Western clawed frog</name>
    <name type="synonym">Silurana tropicalis</name>
    <dbReference type="NCBI Taxonomy" id="8364"/>
    <lineage>
        <taxon>Eukaryota</taxon>
        <taxon>Metazoa</taxon>
        <taxon>Chordata</taxon>
        <taxon>Craniata</taxon>
        <taxon>Vertebrata</taxon>
        <taxon>Euteleostomi</taxon>
        <taxon>Amphibia</taxon>
        <taxon>Batrachia</taxon>
        <taxon>Anura</taxon>
        <taxon>Pipoidea</taxon>
        <taxon>Pipidae</taxon>
        <taxon>Xenopodinae</taxon>
        <taxon>Xenopus</taxon>
        <taxon>Silurana</taxon>
    </lineage>
</organism>
<name>DCA13_XENTR</name>
<protein>
    <recommendedName>
        <fullName>DDB1- and CUL4-associated factor 13</fullName>
    </recommendedName>
    <alternativeName>
        <fullName>WD repeat and SOF domain-containing protein 1</fullName>
    </alternativeName>
</protein>
<gene>
    <name type="primary">dcaf13</name>
    <name type="synonym">wdsof1</name>
    <name type="ORF">TEgg103a13.1</name>
</gene>
<evidence type="ECO:0000250" key="1">
    <source>
        <dbReference type="UniProtKB" id="Q6PAC3"/>
    </source>
</evidence>
<evidence type="ECO:0000250" key="2">
    <source>
        <dbReference type="UniProtKB" id="Q9NV06"/>
    </source>
</evidence>
<evidence type="ECO:0000256" key="3">
    <source>
        <dbReference type="SAM" id="MobiDB-lite"/>
    </source>
</evidence>
<evidence type="ECO:0000305" key="4"/>
<reference key="1">
    <citation type="submission" date="2006-10" db="EMBL/GenBank/DDBJ databases">
        <authorList>
            <consortium name="Sanger Xenopus tropicalis EST/cDNA project"/>
        </authorList>
    </citation>
    <scope>NUCLEOTIDE SEQUENCE [LARGE SCALE MRNA]</scope>
    <source>
        <tissue>Egg</tissue>
    </source>
</reference>
<reference key="2">
    <citation type="submission" date="2004-03" db="EMBL/GenBank/DDBJ databases">
        <authorList>
            <consortium name="NIH - Xenopus Gene Collection (XGC) project"/>
        </authorList>
    </citation>
    <scope>NUCLEOTIDE SEQUENCE [LARGE SCALE MRNA]</scope>
    <source>
        <tissue>Embryo</tissue>
    </source>
</reference>
<accession>Q6NVS5</accession>
<comment type="function">
    <text evidence="2">Part of the small subunit (SSU) processome, first precursor of the small eukaryotic ribosomal subunit. During the assembly of the SSU processome in the nucleolus, many ribosome biogenesis factors, an RNA chaperone and ribosomal proteins associate with the nascent pre-rRNA and work in concert to generate RNA folding, modifications, rearrangements and cleavage as well as targeted degradation of pre-ribosomal RNA by the RNA exosome.</text>
</comment>
<comment type="function">
    <text evidence="2">Substrate-recognition component of a DCX (DDB1-CUL4-X-box) E3 ubiquitin-protein ligase complex.</text>
</comment>
<comment type="pathway">
    <text>Protein modification; protein ubiquitination.</text>
</comment>
<comment type="subunit">
    <text evidence="2">Part of the small subunit (SSU) processome, composed of more than 70 proteins and the RNA chaperone small nucleolar RNA (snoRNA) U3. Component of the DCX(DCAF13) E3 ubiquitin ligase complex, at least composed of CUL4 (CUL4A or CUL4B), DDB1, DCAF13 and RBX1.</text>
</comment>
<comment type="subcellular location">
    <subcellularLocation>
        <location evidence="2">Nucleus</location>
        <location evidence="2">Nucleolus</location>
    </subcellularLocation>
    <text evidence="2">In the nucleolus, localizes predominantly in the granular component, but also detected in the fibrillar center and dense fibrillar component.</text>
</comment>
<comment type="similarity">
    <text evidence="4">Belongs to the WD repeat DCAF13/WDSOF1 family.</text>
</comment>
<sequence>MKVKVLCRNPDDYVRETKRDLQRVPRNYDPALHPFEVPREYTRALNATKLERVFAKPFIASLDGHRDGVNCIAKHPKSLSTVLSGACDGEVKIWNLTKRECSRTIQAHDGFVRGLCVRFCGTSFFTVGDDKTVKQWSMESPGYGEKVEPIRTILGKTVFTGIDHHMNDAIFATCGQQVDIWDEQRSAPMRSYAWGVDSISSIKFNPIETHILSSCGTDRSIVLYDKRKPTPLKKIILEMRTNTLCWNPMEAFIFTAANENFNLYTYDMRYMDGPVKVHMDHVSAVLDVDYSPTGKEFVSASFDKSIRIFPVQSGHSREVYHTKRMQHVTCVRWSADNKYVLCGSDEMNIRIWKANASEKLGLLSPRERAAQNYNQKLKEKFHHHPQIKRIARHRHLPRSIYSQIKEQQIMREARRKKDVNRRKHSKPGSVPIPSEKKKHVLAVVE</sequence>